<sequence>MKLTKLFGLATLVSAVALAGCKDDKPAAAAAPQEPAARKLTVGVMTGAEAQVTEVAAKIAKEKYNIDVKLVEFTEYTQPNDALTKGDLDANAFQHKPYMDKEVEQRGYKLAIVGNTFVFPIAAYSKKIKNVSELQDGATVAVPNNPSNLGRALLLLEKQGLIKLKDPSNLFSTSIDVIENPKNLQIKEVEGSLLPRMLDDVDFAIINNNYAVQQGLTAEKDGIFVEDKDSPYVNLVVSREDNKDNEAIKDFVKAFQTEEVYQEALKHFQGGVVKGW</sequence>
<organism>
    <name type="scientific">Pasteurella multocida (strain Pm70)</name>
    <dbReference type="NCBI Taxonomy" id="272843"/>
    <lineage>
        <taxon>Bacteria</taxon>
        <taxon>Pseudomonadati</taxon>
        <taxon>Pseudomonadota</taxon>
        <taxon>Gammaproteobacteria</taxon>
        <taxon>Pasteurellales</taxon>
        <taxon>Pasteurellaceae</taxon>
        <taxon>Pasteurella</taxon>
    </lineage>
</organism>
<keyword id="KW-0029">Amino-acid transport</keyword>
<keyword id="KW-0998">Cell outer membrane</keyword>
<keyword id="KW-0449">Lipoprotein</keyword>
<keyword id="KW-0472">Membrane</keyword>
<keyword id="KW-0564">Palmitate</keyword>
<keyword id="KW-1185">Reference proteome</keyword>
<keyword id="KW-0732">Signal</keyword>
<keyword id="KW-0813">Transport</keyword>
<feature type="signal peptide" evidence="2">
    <location>
        <begin position="1"/>
        <end position="20"/>
    </location>
</feature>
<feature type="chain" id="PRO_0000019746" description="Probable D-methionine-binding lipoprotein MetQ">
    <location>
        <begin position="21"/>
        <end position="276"/>
    </location>
</feature>
<feature type="lipid moiety-binding region" description="N-palmitoyl cysteine" evidence="2">
    <location>
        <position position="21"/>
    </location>
</feature>
<feature type="lipid moiety-binding region" description="S-diacylglycerol cysteine" evidence="2">
    <location>
        <position position="21"/>
    </location>
</feature>
<dbReference type="EMBL" id="AE004439">
    <property type="protein sequence ID" value="AAK03814.1"/>
    <property type="molecule type" value="Genomic_DNA"/>
</dbReference>
<dbReference type="RefSeq" id="WP_005718787.1">
    <property type="nucleotide sequence ID" value="NC_002663.1"/>
</dbReference>
<dbReference type="SMR" id="Q9CK95"/>
<dbReference type="STRING" id="272843.PM1730"/>
<dbReference type="EnsemblBacteria" id="AAK03814">
    <property type="protein sequence ID" value="AAK03814"/>
    <property type="gene ID" value="PM1730"/>
</dbReference>
<dbReference type="KEGG" id="pmu:PM1730"/>
<dbReference type="PATRIC" id="fig|272843.6.peg.1751"/>
<dbReference type="HOGENOM" id="CLU_067080_0_0_6"/>
<dbReference type="OrthoDB" id="9812878at2"/>
<dbReference type="Proteomes" id="UP000000809">
    <property type="component" value="Chromosome"/>
</dbReference>
<dbReference type="GO" id="GO:0009279">
    <property type="term" value="C:cell outer membrane"/>
    <property type="evidence" value="ECO:0007669"/>
    <property type="project" value="UniProtKB-SubCell"/>
</dbReference>
<dbReference type="GO" id="GO:0006865">
    <property type="term" value="P:amino acid transport"/>
    <property type="evidence" value="ECO:0007669"/>
    <property type="project" value="UniProtKB-KW"/>
</dbReference>
<dbReference type="CDD" id="cd13598">
    <property type="entry name" value="PBP2_lipoprotein_IlpA_like"/>
    <property type="match status" value="1"/>
</dbReference>
<dbReference type="Gene3D" id="3.40.190.10">
    <property type="entry name" value="Periplasmic binding protein-like II"/>
    <property type="match status" value="2"/>
</dbReference>
<dbReference type="InterPro" id="IPR004872">
    <property type="entry name" value="Lipoprotein_NlpA"/>
</dbReference>
<dbReference type="NCBIfam" id="TIGR00363">
    <property type="entry name" value="MetQ/NlpA family lipoprotein"/>
    <property type="match status" value="1"/>
</dbReference>
<dbReference type="NCBIfam" id="NF008285">
    <property type="entry name" value="PRK11063.1"/>
    <property type="match status" value="1"/>
</dbReference>
<dbReference type="PANTHER" id="PTHR30429">
    <property type="entry name" value="D-METHIONINE-BINDING LIPOPROTEIN METQ"/>
    <property type="match status" value="1"/>
</dbReference>
<dbReference type="PANTHER" id="PTHR30429:SF1">
    <property type="entry name" value="D-METHIONINE-BINDING LIPOPROTEIN METQ-RELATED"/>
    <property type="match status" value="1"/>
</dbReference>
<dbReference type="Pfam" id="PF03180">
    <property type="entry name" value="Lipoprotein_9"/>
    <property type="match status" value="1"/>
</dbReference>
<dbReference type="PIRSF" id="PIRSF002854">
    <property type="entry name" value="MetQ"/>
    <property type="match status" value="1"/>
</dbReference>
<dbReference type="SUPFAM" id="SSF53850">
    <property type="entry name" value="Periplasmic binding protein-like II"/>
    <property type="match status" value="1"/>
</dbReference>
<dbReference type="PROSITE" id="PS51257">
    <property type="entry name" value="PROKAR_LIPOPROTEIN"/>
    <property type="match status" value="1"/>
</dbReference>
<reference key="1">
    <citation type="journal article" date="2001" name="Proc. Natl. Acad. Sci. U.S.A.">
        <title>Complete genomic sequence of Pasteurella multocida Pm70.</title>
        <authorList>
            <person name="May B.J."/>
            <person name="Zhang Q."/>
            <person name="Li L.L."/>
            <person name="Paustian M.L."/>
            <person name="Whittam T.S."/>
            <person name="Kapur V."/>
        </authorList>
    </citation>
    <scope>NUCLEOTIDE SEQUENCE [LARGE SCALE GENOMIC DNA]</scope>
    <source>
        <strain>Pm70</strain>
    </source>
</reference>
<comment type="function">
    <text evidence="1">This protein is a component of a D-methionine permease, a binding protein-dependent, ATP-driven transport system.</text>
</comment>
<comment type="subcellular location">
    <subcellularLocation>
        <location evidence="2">Cell outer membrane</location>
        <topology evidence="2">Lipid-anchor</topology>
    </subcellularLocation>
</comment>
<comment type="similarity">
    <text evidence="2">Belongs to the NlpA lipoprotein family.</text>
</comment>
<accession>Q9CK95</accession>
<evidence type="ECO:0000250" key="1"/>
<evidence type="ECO:0000305" key="2"/>
<name>METQ_PASMU</name>
<proteinExistence type="inferred from homology"/>
<protein>
    <recommendedName>
        <fullName>Probable D-methionine-binding lipoprotein MetQ</fullName>
    </recommendedName>
    <alternativeName>
        <fullName>Outer membrane lipoprotein 1</fullName>
    </alternativeName>
</protein>
<gene>
    <name type="primary">metQ</name>
    <name type="synonym">plpA</name>
    <name type="ordered locus">PM1730</name>
</gene>